<gene>
    <name evidence="1" type="primary">lipB</name>
    <name type="ordered locus">BQ06600</name>
</gene>
<reference key="1">
    <citation type="journal article" date="2004" name="Proc. Natl. Acad. Sci. U.S.A.">
        <title>The louse-borne human pathogen Bartonella quintana is a genomic derivative of the zoonotic agent Bartonella henselae.</title>
        <authorList>
            <person name="Alsmark U.C.M."/>
            <person name="Frank A.C."/>
            <person name="Karlberg E.O."/>
            <person name="Legault B.-A."/>
            <person name="Ardell D.H."/>
            <person name="Canbaeck B."/>
            <person name="Eriksson A.-S."/>
            <person name="Naeslund A.K."/>
            <person name="Handley S.A."/>
            <person name="Huvet M."/>
            <person name="La Scola B."/>
            <person name="Holmberg M."/>
            <person name="Andersson S.G.E."/>
        </authorList>
    </citation>
    <scope>NUCLEOTIDE SEQUENCE [LARGE SCALE GENOMIC DNA]</scope>
    <source>
        <strain>Toulouse</strain>
    </source>
</reference>
<sequence length="245" mass="27993">MPFELKRPDRNHLLHHFKTIPGNPPVEWKISNNLIEYPEALHYMQEHVENIFAQNAPEQVWLLEHPSLYTAGTSAKKKDLLAPHLFPVYEAGRGGEFTYHGPGQRIAYIMLDLKRRRQDIRAFIGALEEWIIQTLAKFNIKGERREDRVGVWVKRPNYPFTQSGFSPEDKIAAIGIRVRKWVSFHGVSINVNPNLAHYSGIVPCGITEHGVTSFLDLGFSVTMHDIDIALKQAFEQIFGPTIDVS</sequence>
<protein>
    <recommendedName>
        <fullName evidence="1">Octanoyltransferase</fullName>
        <ecNumber evidence="1">2.3.1.181</ecNumber>
    </recommendedName>
    <alternativeName>
        <fullName evidence="1">Lipoate-protein ligase B</fullName>
    </alternativeName>
    <alternativeName>
        <fullName evidence="1">Lipoyl/octanoyl transferase</fullName>
    </alternativeName>
    <alternativeName>
        <fullName evidence="1">Octanoyl-[acyl-carrier-protein]-protein N-octanoyltransferase</fullName>
    </alternativeName>
</protein>
<name>LIPB_BARQU</name>
<dbReference type="EC" id="2.3.1.181" evidence="1"/>
<dbReference type="EMBL" id="BX897700">
    <property type="protein sequence ID" value="CAF26150.1"/>
    <property type="molecule type" value="Genomic_DNA"/>
</dbReference>
<dbReference type="RefSeq" id="WP_011179408.1">
    <property type="nucleotide sequence ID" value="NC_005955.1"/>
</dbReference>
<dbReference type="SMR" id="Q6FZQ9"/>
<dbReference type="GeneID" id="56532979"/>
<dbReference type="KEGG" id="bqu:BQ06600"/>
<dbReference type="eggNOG" id="COG0321">
    <property type="taxonomic scope" value="Bacteria"/>
</dbReference>
<dbReference type="HOGENOM" id="CLU_035168_3_0_5"/>
<dbReference type="OrthoDB" id="9787061at2"/>
<dbReference type="UniPathway" id="UPA00538">
    <property type="reaction ID" value="UER00592"/>
</dbReference>
<dbReference type="Proteomes" id="UP000000597">
    <property type="component" value="Chromosome"/>
</dbReference>
<dbReference type="GO" id="GO:0005737">
    <property type="term" value="C:cytoplasm"/>
    <property type="evidence" value="ECO:0007669"/>
    <property type="project" value="UniProtKB-SubCell"/>
</dbReference>
<dbReference type="GO" id="GO:0033819">
    <property type="term" value="F:lipoyl(octanoyl) transferase activity"/>
    <property type="evidence" value="ECO:0007669"/>
    <property type="project" value="UniProtKB-EC"/>
</dbReference>
<dbReference type="GO" id="GO:0036211">
    <property type="term" value="P:protein modification process"/>
    <property type="evidence" value="ECO:0007669"/>
    <property type="project" value="InterPro"/>
</dbReference>
<dbReference type="CDD" id="cd16444">
    <property type="entry name" value="LipB"/>
    <property type="match status" value="1"/>
</dbReference>
<dbReference type="Gene3D" id="3.30.930.10">
    <property type="entry name" value="Bira Bifunctional Protein, Domain 2"/>
    <property type="match status" value="1"/>
</dbReference>
<dbReference type="HAMAP" id="MF_00013">
    <property type="entry name" value="LipB"/>
    <property type="match status" value="1"/>
</dbReference>
<dbReference type="InterPro" id="IPR045864">
    <property type="entry name" value="aa-tRNA-synth_II/BPL/LPL"/>
</dbReference>
<dbReference type="InterPro" id="IPR004143">
    <property type="entry name" value="BPL_LPL_catalytic"/>
</dbReference>
<dbReference type="InterPro" id="IPR000544">
    <property type="entry name" value="Octanoyltransferase"/>
</dbReference>
<dbReference type="InterPro" id="IPR020605">
    <property type="entry name" value="Octanoyltransferase_CS"/>
</dbReference>
<dbReference type="NCBIfam" id="TIGR00214">
    <property type="entry name" value="lipB"/>
    <property type="match status" value="1"/>
</dbReference>
<dbReference type="NCBIfam" id="NF010921">
    <property type="entry name" value="PRK14341.1"/>
    <property type="match status" value="1"/>
</dbReference>
<dbReference type="NCBIfam" id="NF010925">
    <property type="entry name" value="PRK14345.1"/>
    <property type="match status" value="1"/>
</dbReference>
<dbReference type="PANTHER" id="PTHR10993:SF7">
    <property type="entry name" value="LIPOYLTRANSFERASE 2, MITOCHONDRIAL-RELATED"/>
    <property type="match status" value="1"/>
</dbReference>
<dbReference type="PANTHER" id="PTHR10993">
    <property type="entry name" value="OCTANOYLTRANSFERASE"/>
    <property type="match status" value="1"/>
</dbReference>
<dbReference type="Pfam" id="PF21948">
    <property type="entry name" value="LplA-B_cat"/>
    <property type="match status" value="1"/>
</dbReference>
<dbReference type="PIRSF" id="PIRSF016262">
    <property type="entry name" value="LPLase"/>
    <property type="match status" value="1"/>
</dbReference>
<dbReference type="SUPFAM" id="SSF55681">
    <property type="entry name" value="Class II aaRS and biotin synthetases"/>
    <property type="match status" value="1"/>
</dbReference>
<dbReference type="PROSITE" id="PS51733">
    <property type="entry name" value="BPL_LPL_CATALYTIC"/>
    <property type="match status" value="1"/>
</dbReference>
<dbReference type="PROSITE" id="PS01313">
    <property type="entry name" value="LIPB"/>
    <property type="match status" value="1"/>
</dbReference>
<accession>Q6FZQ9</accession>
<proteinExistence type="inferred from homology"/>
<keyword id="KW-0012">Acyltransferase</keyword>
<keyword id="KW-0963">Cytoplasm</keyword>
<keyword id="KW-0808">Transferase</keyword>
<comment type="function">
    <text evidence="1">Catalyzes the transfer of endogenously produced octanoic acid from octanoyl-acyl-carrier-protein onto the lipoyl domains of lipoate-dependent enzymes. Lipoyl-ACP can also act as a substrate although octanoyl-ACP is likely to be the physiological substrate.</text>
</comment>
<comment type="catalytic activity">
    <reaction evidence="1">
        <text>octanoyl-[ACP] + L-lysyl-[protein] = N(6)-octanoyl-L-lysyl-[protein] + holo-[ACP] + H(+)</text>
        <dbReference type="Rhea" id="RHEA:17665"/>
        <dbReference type="Rhea" id="RHEA-COMP:9636"/>
        <dbReference type="Rhea" id="RHEA-COMP:9685"/>
        <dbReference type="Rhea" id="RHEA-COMP:9752"/>
        <dbReference type="Rhea" id="RHEA-COMP:9928"/>
        <dbReference type="ChEBI" id="CHEBI:15378"/>
        <dbReference type="ChEBI" id="CHEBI:29969"/>
        <dbReference type="ChEBI" id="CHEBI:64479"/>
        <dbReference type="ChEBI" id="CHEBI:78463"/>
        <dbReference type="ChEBI" id="CHEBI:78809"/>
        <dbReference type="EC" id="2.3.1.181"/>
    </reaction>
</comment>
<comment type="pathway">
    <text evidence="1">Protein modification; protein lipoylation via endogenous pathway; protein N(6)-(lipoyl)lysine from octanoyl-[acyl-carrier-protein]: step 1/2.</text>
</comment>
<comment type="subcellular location">
    <subcellularLocation>
        <location evidence="1">Cytoplasm</location>
    </subcellularLocation>
</comment>
<comment type="miscellaneous">
    <text evidence="1">In the reaction, the free carboxyl group of octanoic acid is attached via an amide linkage to the epsilon-amino group of a specific lysine residue of lipoyl domains of lipoate-dependent enzymes.</text>
</comment>
<comment type="similarity">
    <text evidence="1">Belongs to the LipB family.</text>
</comment>
<organism>
    <name type="scientific">Bartonella quintana (strain Toulouse)</name>
    <name type="common">Rochalimaea quintana</name>
    <dbReference type="NCBI Taxonomy" id="283165"/>
    <lineage>
        <taxon>Bacteria</taxon>
        <taxon>Pseudomonadati</taxon>
        <taxon>Pseudomonadota</taxon>
        <taxon>Alphaproteobacteria</taxon>
        <taxon>Hyphomicrobiales</taxon>
        <taxon>Bartonellaceae</taxon>
        <taxon>Bartonella</taxon>
    </lineage>
</organism>
<evidence type="ECO:0000255" key="1">
    <source>
        <dbReference type="HAMAP-Rule" id="MF_00013"/>
    </source>
</evidence>
<evidence type="ECO:0000255" key="2">
    <source>
        <dbReference type="PROSITE-ProRule" id="PRU01067"/>
    </source>
</evidence>
<feature type="chain" id="PRO_0000062812" description="Octanoyltransferase">
    <location>
        <begin position="1"/>
        <end position="245"/>
    </location>
</feature>
<feature type="domain" description="BPL/LPL catalytic" evidence="2">
    <location>
        <begin position="54"/>
        <end position="242"/>
    </location>
</feature>
<feature type="active site" description="Acyl-thioester intermediate" evidence="1">
    <location>
        <position position="204"/>
    </location>
</feature>
<feature type="binding site" evidence="1">
    <location>
        <begin position="93"/>
        <end position="100"/>
    </location>
    <ligand>
        <name>substrate</name>
    </ligand>
</feature>
<feature type="binding site" evidence="1">
    <location>
        <begin position="173"/>
        <end position="175"/>
    </location>
    <ligand>
        <name>substrate</name>
    </ligand>
</feature>
<feature type="binding site" evidence="1">
    <location>
        <begin position="186"/>
        <end position="188"/>
    </location>
    <ligand>
        <name>substrate</name>
    </ligand>
</feature>
<feature type="site" description="Lowers pKa of active site Cys" evidence="1">
    <location>
        <position position="170"/>
    </location>
</feature>